<gene>
    <name evidence="1" type="primary">rpsJ</name>
    <name type="ordered locus">MAB_3821c</name>
</gene>
<comment type="function">
    <text evidence="1">Involved in the binding of tRNA to the ribosomes.</text>
</comment>
<comment type="subunit">
    <text evidence="1">Part of the 30S ribosomal subunit.</text>
</comment>
<comment type="similarity">
    <text evidence="1">Belongs to the universal ribosomal protein uS10 family.</text>
</comment>
<protein>
    <recommendedName>
        <fullName evidence="1">Small ribosomal subunit protein uS10</fullName>
    </recommendedName>
    <alternativeName>
        <fullName evidence="2">30S ribosomal protein S10</fullName>
    </alternativeName>
</protein>
<evidence type="ECO:0000255" key="1">
    <source>
        <dbReference type="HAMAP-Rule" id="MF_00508"/>
    </source>
</evidence>
<evidence type="ECO:0000305" key="2"/>
<feature type="chain" id="PRO_1000127153" description="Small ribosomal subunit protein uS10">
    <location>
        <begin position="1"/>
        <end position="101"/>
    </location>
</feature>
<keyword id="KW-1185">Reference proteome</keyword>
<keyword id="KW-0687">Ribonucleoprotein</keyword>
<keyword id="KW-0689">Ribosomal protein</keyword>
<accession>B1MGF1</accession>
<organism>
    <name type="scientific">Mycobacteroides abscessus (strain ATCC 19977 / DSM 44196 / CCUG 20993 / CIP 104536 / JCM 13569 / NCTC 13031 / TMC 1543 / L948)</name>
    <name type="common">Mycobacterium abscessus</name>
    <dbReference type="NCBI Taxonomy" id="561007"/>
    <lineage>
        <taxon>Bacteria</taxon>
        <taxon>Bacillati</taxon>
        <taxon>Actinomycetota</taxon>
        <taxon>Actinomycetes</taxon>
        <taxon>Mycobacteriales</taxon>
        <taxon>Mycobacteriaceae</taxon>
        <taxon>Mycobacteroides</taxon>
        <taxon>Mycobacteroides abscessus</taxon>
    </lineage>
</organism>
<reference key="1">
    <citation type="journal article" date="2009" name="PLoS ONE">
        <title>Non mycobacterial virulence genes in the genome of the emerging pathogen Mycobacterium abscessus.</title>
        <authorList>
            <person name="Ripoll F."/>
            <person name="Pasek S."/>
            <person name="Schenowitz C."/>
            <person name="Dossat C."/>
            <person name="Barbe V."/>
            <person name="Rottman M."/>
            <person name="Macheras E."/>
            <person name="Heym B."/>
            <person name="Herrmann J.L."/>
            <person name="Daffe M."/>
            <person name="Brosch R."/>
            <person name="Risler J.L."/>
            <person name="Gaillard J.L."/>
        </authorList>
    </citation>
    <scope>NUCLEOTIDE SEQUENCE [LARGE SCALE GENOMIC DNA]</scope>
    <source>
        <strain>ATCC 19977 / DSM 44196 / CCUG 20993 / CIP 104536 / JCM 13569 / NCTC 13031 / TMC 1543 / L948</strain>
    </source>
</reference>
<name>RS10_MYCA9</name>
<proteinExistence type="inferred from homology"/>
<dbReference type="EMBL" id="CU458896">
    <property type="protein sequence ID" value="CAM63896.1"/>
    <property type="molecule type" value="Genomic_DNA"/>
</dbReference>
<dbReference type="RefSeq" id="WP_003883485.1">
    <property type="nucleotide sequence ID" value="NZ_MLCG01000001.1"/>
</dbReference>
<dbReference type="SMR" id="B1MGF1"/>
<dbReference type="GeneID" id="98800347"/>
<dbReference type="KEGG" id="mab:MAB_3821c"/>
<dbReference type="Proteomes" id="UP000007137">
    <property type="component" value="Chromosome"/>
</dbReference>
<dbReference type="GO" id="GO:1990904">
    <property type="term" value="C:ribonucleoprotein complex"/>
    <property type="evidence" value="ECO:0007669"/>
    <property type="project" value="UniProtKB-KW"/>
</dbReference>
<dbReference type="GO" id="GO:0005840">
    <property type="term" value="C:ribosome"/>
    <property type="evidence" value="ECO:0007669"/>
    <property type="project" value="UniProtKB-KW"/>
</dbReference>
<dbReference type="GO" id="GO:0003735">
    <property type="term" value="F:structural constituent of ribosome"/>
    <property type="evidence" value="ECO:0007669"/>
    <property type="project" value="InterPro"/>
</dbReference>
<dbReference type="GO" id="GO:0000049">
    <property type="term" value="F:tRNA binding"/>
    <property type="evidence" value="ECO:0007669"/>
    <property type="project" value="UniProtKB-UniRule"/>
</dbReference>
<dbReference type="GO" id="GO:0006412">
    <property type="term" value="P:translation"/>
    <property type="evidence" value="ECO:0007669"/>
    <property type="project" value="UniProtKB-UniRule"/>
</dbReference>
<dbReference type="FunFam" id="3.30.70.600:FF:000001">
    <property type="entry name" value="30S ribosomal protein S10"/>
    <property type="match status" value="1"/>
</dbReference>
<dbReference type="Gene3D" id="3.30.70.600">
    <property type="entry name" value="Ribosomal protein S10 domain"/>
    <property type="match status" value="1"/>
</dbReference>
<dbReference type="HAMAP" id="MF_00508">
    <property type="entry name" value="Ribosomal_uS10"/>
    <property type="match status" value="1"/>
</dbReference>
<dbReference type="InterPro" id="IPR001848">
    <property type="entry name" value="Ribosomal_uS10"/>
</dbReference>
<dbReference type="InterPro" id="IPR018268">
    <property type="entry name" value="Ribosomal_uS10_CS"/>
</dbReference>
<dbReference type="InterPro" id="IPR027486">
    <property type="entry name" value="Ribosomal_uS10_dom"/>
</dbReference>
<dbReference type="InterPro" id="IPR036838">
    <property type="entry name" value="Ribosomal_uS10_dom_sf"/>
</dbReference>
<dbReference type="NCBIfam" id="NF001861">
    <property type="entry name" value="PRK00596.1"/>
    <property type="match status" value="1"/>
</dbReference>
<dbReference type="NCBIfam" id="TIGR01049">
    <property type="entry name" value="rpsJ_bact"/>
    <property type="match status" value="1"/>
</dbReference>
<dbReference type="PANTHER" id="PTHR11700">
    <property type="entry name" value="30S RIBOSOMAL PROTEIN S10 FAMILY MEMBER"/>
    <property type="match status" value="1"/>
</dbReference>
<dbReference type="Pfam" id="PF00338">
    <property type="entry name" value="Ribosomal_S10"/>
    <property type="match status" value="1"/>
</dbReference>
<dbReference type="PRINTS" id="PR00971">
    <property type="entry name" value="RIBOSOMALS10"/>
</dbReference>
<dbReference type="SMART" id="SM01403">
    <property type="entry name" value="Ribosomal_S10"/>
    <property type="match status" value="1"/>
</dbReference>
<dbReference type="SUPFAM" id="SSF54999">
    <property type="entry name" value="Ribosomal protein S10"/>
    <property type="match status" value="1"/>
</dbReference>
<dbReference type="PROSITE" id="PS00361">
    <property type="entry name" value="RIBOSOMAL_S10"/>
    <property type="match status" value="1"/>
</dbReference>
<sequence>MAGQKIRIRLKAYDHEAIDASARKIVETVTRTGASVVGPVPLPTEKNVYCVIRSPHKYKDSREHFEMRTHKRLIDILDPTPKTVDALMRIDLPASVDVNIQ</sequence>